<comment type="function">
    <text evidence="2">Catalyzes the conversion of dTDP-4-dehydro-6-deoxy-D-glucose (dTDP-D-Glc4O) to dTDP-4-amino-4,6-dideoxy-D-glucose (dTDP-D-Qui4N). L-glutamine can also be used as amino donor.</text>
</comment>
<comment type="catalytic activity">
    <reaction evidence="2">
        <text>dTDP-4-amino-4,6-dideoxy-D-glucose + 2-oxoglutarate = dTDP-4-dehydro-6-deoxy-alpha-D-glucose + L-glutamate</text>
        <dbReference type="Rhea" id="RHEA:19085"/>
        <dbReference type="ChEBI" id="CHEBI:16810"/>
        <dbReference type="ChEBI" id="CHEBI:29985"/>
        <dbReference type="ChEBI" id="CHEBI:57582"/>
        <dbReference type="ChEBI" id="CHEBI:57649"/>
        <dbReference type="EC" id="2.6.1.33"/>
    </reaction>
</comment>
<comment type="cofactor">
    <cofactor evidence="2">
        <name>pyridoxal 5'-phosphate</name>
        <dbReference type="ChEBI" id="CHEBI:597326"/>
    </cofactor>
</comment>
<comment type="biophysicochemical properties">
    <kinetics>
        <KM evidence="2">980 uM for dTDP-D-Glc4O</KM>
    </kinetics>
    <temperatureDependence>
        <text evidence="2">Optimum temperature is 37 degrees Celsius.</text>
    </temperatureDependence>
</comment>
<comment type="pathway">
    <text evidence="2">Bacterial outer membrane biogenesis; lipopolysaccharide biosynthesis.</text>
</comment>
<comment type="similarity">
    <text evidence="3">Belongs to the DegT/DnrJ/EryC1 family.</text>
</comment>
<proteinExistence type="evidence at protein level"/>
<feature type="chain" id="PRO_0000424155" description="dTDP-4-amino-4,6-dideoxy-D-glucose transaminase">
    <location>
        <begin position="1"/>
        <end position="367"/>
    </location>
</feature>
<feature type="modified residue" description="N6-(pyridoxal phosphate)lysine" evidence="1">
    <location>
        <position position="184"/>
    </location>
</feature>
<organism>
    <name type="scientific">Shigella dysenteriae</name>
    <dbReference type="NCBI Taxonomy" id="622"/>
    <lineage>
        <taxon>Bacteria</taxon>
        <taxon>Pseudomonadati</taxon>
        <taxon>Pseudomonadota</taxon>
        <taxon>Gammaproteobacteria</taxon>
        <taxon>Enterobacterales</taxon>
        <taxon>Enterobacteriaceae</taxon>
        <taxon>Shigella</taxon>
    </lineage>
</organism>
<name>VIOA_SHIDY</name>
<keyword id="KW-0032">Aminotransferase</keyword>
<keyword id="KW-0448">Lipopolysaccharide biosynthesis</keyword>
<keyword id="KW-0663">Pyridoxal phosphate</keyword>
<keyword id="KW-0808">Transferase</keyword>
<gene>
    <name type="primary">vioA</name>
</gene>
<accession>Q6U1I3</accession>
<evidence type="ECO:0000250" key="1"/>
<evidence type="ECO:0000269" key="2">
    <source>
    </source>
</evidence>
<evidence type="ECO:0000305" key="3"/>
<dbReference type="EC" id="2.6.1.33"/>
<dbReference type="EMBL" id="AY380835">
    <property type="protein sequence ID" value="AAR97958.1"/>
    <property type="molecule type" value="Genomic_DNA"/>
</dbReference>
<dbReference type="SMR" id="Q6U1I3"/>
<dbReference type="KEGG" id="ag:AAR97958"/>
<dbReference type="SABIO-RK" id="Q6U1I3"/>
<dbReference type="UniPathway" id="UPA00030"/>
<dbReference type="GO" id="GO:0019179">
    <property type="term" value="F:dTDP-4-amino-4,6-dideoxy-D-glucose transaminase activity"/>
    <property type="evidence" value="ECO:0007669"/>
    <property type="project" value="UniProtKB-EC"/>
</dbReference>
<dbReference type="GO" id="GO:0030170">
    <property type="term" value="F:pyridoxal phosphate binding"/>
    <property type="evidence" value="ECO:0007669"/>
    <property type="project" value="TreeGrafter"/>
</dbReference>
<dbReference type="GO" id="GO:0009103">
    <property type="term" value="P:lipopolysaccharide biosynthetic process"/>
    <property type="evidence" value="ECO:0007669"/>
    <property type="project" value="UniProtKB-UniPathway"/>
</dbReference>
<dbReference type="CDD" id="cd00616">
    <property type="entry name" value="AHBA_syn"/>
    <property type="match status" value="1"/>
</dbReference>
<dbReference type="Gene3D" id="3.40.640.10">
    <property type="entry name" value="Type I PLP-dependent aspartate aminotransferase-like (Major domain)"/>
    <property type="match status" value="1"/>
</dbReference>
<dbReference type="InterPro" id="IPR000653">
    <property type="entry name" value="DegT/StrS_aminotransferase"/>
</dbReference>
<dbReference type="InterPro" id="IPR015424">
    <property type="entry name" value="PyrdxlP-dep_Trfase"/>
</dbReference>
<dbReference type="InterPro" id="IPR015421">
    <property type="entry name" value="PyrdxlP-dep_Trfase_major"/>
</dbReference>
<dbReference type="PANTHER" id="PTHR30244:SF9">
    <property type="entry name" value="PROTEIN RV3402C"/>
    <property type="match status" value="1"/>
</dbReference>
<dbReference type="PANTHER" id="PTHR30244">
    <property type="entry name" value="TRANSAMINASE"/>
    <property type="match status" value="1"/>
</dbReference>
<dbReference type="Pfam" id="PF01041">
    <property type="entry name" value="DegT_DnrJ_EryC1"/>
    <property type="match status" value="1"/>
</dbReference>
<dbReference type="PIRSF" id="PIRSF000390">
    <property type="entry name" value="PLP_StrS"/>
    <property type="match status" value="1"/>
</dbReference>
<dbReference type="SUPFAM" id="SSF53383">
    <property type="entry name" value="PLP-dependent transferases"/>
    <property type="match status" value="1"/>
</dbReference>
<reference key="1">
    <citation type="journal article" date="2004" name="Microb. Pathog.">
        <title>Structure of the Shigella dysenteriae 7 O antigen gene cluster and identification of its antigen specific genes.</title>
        <authorList>
            <person name="Feng L."/>
            <person name="Tao J."/>
            <person name="Guo H."/>
            <person name="Xu J."/>
            <person name="Li Y."/>
            <person name="Rezwan F."/>
            <person name="Reeves P."/>
            <person name="Wang L."/>
        </authorList>
    </citation>
    <scope>NUCLEOTIDE SEQUENCE [GENOMIC DNA]</scope>
    <source>
        <strain>M1354 / Serotype 7</strain>
    </source>
</reference>
<reference key="2">
    <citation type="journal article" date="2007" name="J. Bacteriol.">
        <title>Biochemical characterization of dTDP-D-Qui4N and dTDP-D-Qui4NAc biosynthetic pathways in Shigella dysenteriae type 7 and Escherichia coli O7.</title>
        <authorList>
            <person name="Wang Y."/>
            <person name="Xu Y."/>
            <person name="Perepelov A.V."/>
            <person name="Qi Y."/>
            <person name="Knirel Y.A."/>
            <person name="Wang L."/>
            <person name="Feng L."/>
        </authorList>
    </citation>
    <scope>FUNCTION</scope>
    <scope>CATALYTIC ACTIVITY</scope>
    <scope>COFACTOR</scope>
    <scope>BIOPHYSICOCHEMICAL PROPERTIES</scope>
    <scope>PATHWAY</scope>
    <source>
        <strain>G1222 / Serotype 7</strain>
    </source>
</reference>
<sequence length="367" mass="41407">MEKPIFVTQPNLPPLEEFIPYLEIIWQNKQFTNNGPMHQKLEKKLCEFLGVEYISLFNNGTIALITAVQALGVKGEVITTPYSFVATAHSLVLNGLKPVFVDIDPKTLNIDPRRIEEAITPETQAIMPVHCYGNPCDTQAIADIAQKYNLKVIYDAAHAFGVEDDDGSVLRHGDLSVLSFHATKVFSTFEGGAIVCNSKEMKEKIDRLKNFGYIDETNINIIGSNGKMSEVNAAFGLLQLEHMDTFLRGRMNADMFYRQKLKDITGISIVIPSGQKISNFSYFPILVESDFPLSRDELFNYLKNQNIFARRYFYPVIPDFQAYLNVGEVCDVKNAREIASKVLCLPMHAELSSDILEYIVSTIREIK</sequence>
<protein>
    <recommendedName>
        <fullName>dTDP-4-amino-4,6-dideoxy-D-glucose transaminase</fullName>
        <ecNumber>2.6.1.33</ecNumber>
    </recommendedName>
</protein>